<feature type="chain" id="PRO_0000091643" description="3-hydroxyacyl-[acyl-carrier-protein] dehydratase FabZ">
    <location>
        <begin position="1"/>
        <end position="155"/>
    </location>
</feature>
<feature type="active site" evidence="1">
    <location>
        <position position="59"/>
    </location>
</feature>
<comment type="function">
    <text evidence="1">Involved in unsaturated fatty acids biosynthesis. Catalyzes the dehydration of short chain beta-hydroxyacyl-ACPs and long chain saturated and unsaturated beta-hydroxyacyl-ACPs.</text>
</comment>
<comment type="catalytic activity">
    <reaction evidence="1">
        <text>a (3R)-hydroxyacyl-[ACP] = a (2E)-enoyl-[ACP] + H2O</text>
        <dbReference type="Rhea" id="RHEA:13097"/>
        <dbReference type="Rhea" id="RHEA-COMP:9925"/>
        <dbReference type="Rhea" id="RHEA-COMP:9945"/>
        <dbReference type="ChEBI" id="CHEBI:15377"/>
        <dbReference type="ChEBI" id="CHEBI:78784"/>
        <dbReference type="ChEBI" id="CHEBI:78827"/>
        <dbReference type="EC" id="4.2.1.59"/>
    </reaction>
</comment>
<comment type="subcellular location">
    <subcellularLocation>
        <location evidence="1">Cytoplasm</location>
    </subcellularLocation>
</comment>
<comment type="similarity">
    <text evidence="1">Belongs to the thioester dehydratase family. FabZ subfamily.</text>
</comment>
<evidence type="ECO:0000255" key="1">
    <source>
        <dbReference type="HAMAP-Rule" id="MF_00406"/>
    </source>
</evidence>
<sequence length="155" mass="17324">MITTEGTRSLETLDIEKLLSILPHRYPFLLIDRIVEIDGEQEAIGIKNITINEPHFVGHFPAKPVMPGVLILEAMAQTAGAISLLRLGNKQTNLVYLMTVDNAKFRKPVIPGDQLKIHVRLLKKRSGMRRFSCIAEVKGVRVAEAEIAAMILEKE</sequence>
<reference key="1">
    <citation type="submission" date="2001-12" db="EMBL/GenBank/DDBJ databases">
        <title>Cloning, nucleotide sequencing, and expression of a hemin-binding protein of Bartonella henselae.</title>
        <authorList>
            <person name="Zimmermann R."/>
            <person name="Augustin K."/>
            <person name="Schaal K."/>
            <person name="Sander A."/>
        </authorList>
    </citation>
    <scope>NUCLEOTIDE SEQUENCE [GENOMIC DNA]</scope>
</reference>
<reference key="2">
    <citation type="journal article" date="2004" name="Proc. Natl. Acad. Sci. U.S.A.">
        <title>The louse-borne human pathogen Bartonella quintana is a genomic derivative of the zoonotic agent Bartonella henselae.</title>
        <authorList>
            <person name="Alsmark U.C.M."/>
            <person name="Frank A.C."/>
            <person name="Karlberg E.O."/>
            <person name="Legault B.-A."/>
            <person name="Ardell D.H."/>
            <person name="Canbaeck B."/>
            <person name="Eriksson A.-S."/>
            <person name="Naeslund A.K."/>
            <person name="Handley S.A."/>
            <person name="Huvet M."/>
            <person name="La Scola B."/>
            <person name="Holmberg M."/>
            <person name="Andersson S.G.E."/>
        </authorList>
    </citation>
    <scope>NUCLEOTIDE SEQUENCE [LARGE SCALE GENOMIC DNA]</scope>
    <source>
        <strain>ATCC 49882 / DSM 28221 / CCUG 30454 / Houston 1</strain>
    </source>
</reference>
<gene>
    <name evidence="1" type="primary">fabZ</name>
    <name type="ordered locus">BH06300</name>
</gene>
<protein>
    <recommendedName>
        <fullName evidence="1">3-hydroxyacyl-[acyl-carrier-protein] dehydratase FabZ</fullName>
        <ecNumber evidence="1">4.2.1.59</ecNumber>
    </recommendedName>
    <alternativeName>
        <fullName evidence="1">(3R)-hydroxymyristoyl-[acyl-carrier-protein] dehydratase</fullName>
        <shortName evidence="1">(3R)-hydroxymyristoyl-ACP dehydrase</shortName>
    </alternativeName>
    <alternativeName>
        <fullName evidence="1">Beta-hydroxyacyl-ACP dehydratase</fullName>
    </alternativeName>
</protein>
<keyword id="KW-0963">Cytoplasm</keyword>
<keyword id="KW-0441">Lipid A biosynthesis</keyword>
<keyword id="KW-0444">Lipid biosynthesis</keyword>
<keyword id="KW-0443">Lipid metabolism</keyword>
<keyword id="KW-0456">Lyase</keyword>
<organism>
    <name type="scientific">Bartonella henselae (strain ATCC 49882 / DSM 28221 / CCUG 30454 / Houston 1)</name>
    <name type="common">Rochalimaea henselae</name>
    <dbReference type="NCBI Taxonomy" id="283166"/>
    <lineage>
        <taxon>Bacteria</taxon>
        <taxon>Pseudomonadati</taxon>
        <taxon>Pseudomonadota</taxon>
        <taxon>Alphaproteobacteria</taxon>
        <taxon>Hyphomicrobiales</taxon>
        <taxon>Bartonellaceae</taxon>
        <taxon>Bartonella</taxon>
    </lineage>
</organism>
<dbReference type="EC" id="4.2.1.59" evidence="1"/>
<dbReference type="EMBL" id="AF461795">
    <property type="protein sequence ID" value="AAL66376.1"/>
    <property type="molecule type" value="Genomic_DNA"/>
</dbReference>
<dbReference type="EMBL" id="BX897699">
    <property type="protein sequence ID" value="CAF27434.1"/>
    <property type="molecule type" value="Genomic_DNA"/>
</dbReference>
<dbReference type="RefSeq" id="WP_011180554.1">
    <property type="nucleotide sequence ID" value="NZ_LRIJ02000001.1"/>
</dbReference>
<dbReference type="SMR" id="Q8VQ22"/>
<dbReference type="PaxDb" id="283166-BH06300"/>
<dbReference type="EnsemblBacteria" id="CAF27434">
    <property type="protein sequence ID" value="CAF27434"/>
    <property type="gene ID" value="BH06300"/>
</dbReference>
<dbReference type="GeneID" id="92985644"/>
<dbReference type="KEGG" id="bhe:BH06300"/>
<dbReference type="eggNOG" id="COG0764">
    <property type="taxonomic scope" value="Bacteria"/>
</dbReference>
<dbReference type="OrthoDB" id="9772788at2"/>
<dbReference type="Proteomes" id="UP000000421">
    <property type="component" value="Chromosome"/>
</dbReference>
<dbReference type="GO" id="GO:0005737">
    <property type="term" value="C:cytoplasm"/>
    <property type="evidence" value="ECO:0007669"/>
    <property type="project" value="UniProtKB-SubCell"/>
</dbReference>
<dbReference type="GO" id="GO:0016020">
    <property type="term" value="C:membrane"/>
    <property type="evidence" value="ECO:0007669"/>
    <property type="project" value="GOC"/>
</dbReference>
<dbReference type="GO" id="GO:0019171">
    <property type="term" value="F:(3R)-hydroxyacyl-[acyl-carrier-protein] dehydratase activity"/>
    <property type="evidence" value="ECO:0007669"/>
    <property type="project" value="UniProtKB-EC"/>
</dbReference>
<dbReference type="GO" id="GO:0006633">
    <property type="term" value="P:fatty acid biosynthetic process"/>
    <property type="evidence" value="ECO:0007669"/>
    <property type="project" value="UniProtKB-UniRule"/>
</dbReference>
<dbReference type="GO" id="GO:0009245">
    <property type="term" value="P:lipid A biosynthetic process"/>
    <property type="evidence" value="ECO:0007669"/>
    <property type="project" value="UniProtKB-UniRule"/>
</dbReference>
<dbReference type="CDD" id="cd01288">
    <property type="entry name" value="FabZ"/>
    <property type="match status" value="1"/>
</dbReference>
<dbReference type="FunFam" id="3.10.129.10:FF:000001">
    <property type="entry name" value="3-hydroxyacyl-[acyl-carrier-protein] dehydratase FabZ"/>
    <property type="match status" value="1"/>
</dbReference>
<dbReference type="Gene3D" id="3.10.129.10">
    <property type="entry name" value="Hotdog Thioesterase"/>
    <property type="match status" value="1"/>
</dbReference>
<dbReference type="HAMAP" id="MF_00406">
    <property type="entry name" value="FabZ"/>
    <property type="match status" value="1"/>
</dbReference>
<dbReference type="InterPro" id="IPR013114">
    <property type="entry name" value="FabA_FabZ"/>
</dbReference>
<dbReference type="InterPro" id="IPR010084">
    <property type="entry name" value="FabZ"/>
</dbReference>
<dbReference type="InterPro" id="IPR029069">
    <property type="entry name" value="HotDog_dom_sf"/>
</dbReference>
<dbReference type="NCBIfam" id="TIGR01750">
    <property type="entry name" value="fabZ"/>
    <property type="match status" value="1"/>
</dbReference>
<dbReference type="NCBIfam" id="NF000582">
    <property type="entry name" value="PRK00006.1"/>
    <property type="match status" value="1"/>
</dbReference>
<dbReference type="PANTHER" id="PTHR30272">
    <property type="entry name" value="3-HYDROXYACYL-[ACYL-CARRIER-PROTEIN] DEHYDRATASE"/>
    <property type="match status" value="1"/>
</dbReference>
<dbReference type="PANTHER" id="PTHR30272:SF1">
    <property type="entry name" value="3-HYDROXYACYL-[ACYL-CARRIER-PROTEIN] DEHYDRATASE"/>
    <property type="match status" value="1"/>
</dbReference>
<dbReference type="Pfam" id="PF07977">
    <property type="entry name" value="FabA"/>
    <property type="match status" value="1"/>
</dbReference>
<dbReference type="SUPFAM" id="SSF54637">
    <property type="entry name" value="Thioesterase/thiol ester dehydrase-isomerase"/>
    <property type="match status" value="1"/>
</dbReference>
<name>FABZ_BARHE</name>
<accession>Q8VQ22</accession>
<proteinExistence type="inferred from homology"/>